<dbReference type="EC" id="1.3.1.98" evidence="1"/>
<dbReference type="EMBL" id="CP000728">
    <property type="protein sequence ID" value="ABS40940.1"/>
    <property type="molecule type" value="Genomic_DNA"/>
</dbReference>
<dbReference type="RefSeq" id="WP_003357383.1">
    <property type="nucleotide sequence ID" value="NC_009699.1"/>
</dbReference>
<dbReference type="SMR" id="A7GIX4"/>
<dbReference type="KEGG" id="cbf:CLI_3562"/>
<dbReference type="HOGENOM" id="CLU_035304_1_1_9"/>
<dbReference type="UniPathway" id="UPA00219"/>
<dbReference type="Proteomes" id="UP000002410">
    <property type="component" value="Chromosome"/>
</dbReference>
<dbReference type="GO" id="GO:0005829">
    <property type="term" value="C:cytosol"/>
    <property type="evidence" value="ECO:0007669"/>
    <property type="project" value="TreeGrafter"/>
</dbReference>
<dbReference type="GO" id="GO:0071949">
    <property type="term" value="F:FAD binding"/>
    <property type="evidence" value="ECO:0007669"/>
    <property type="project" value="InterPro"/>
</dbReference>
<dbReference type="GO" id="GO:0008762">
    <property type="term" value="F:UDP-N-acetylmuramate dehydrogenase activity"/>
    <property type="evidence" value="ECO:0007669"/>
    <property type="project" value="UniProtKB-UniRule"/>
</dbReference>
<dbReference type="GO" id="GO:0051301">
    <property type="term" value="P:cell division"/>
    <property type="evidence" value="ECO:0007669"/>
    <property type="project" value="UniProtKB-KW"/>
</dbReference>
<dbReference type="GO" id="GO:0071555">
    <property type="term" value="P:cell wall organization"/>
    <property type="evidence" value="ECO:0007669"/>
    <property type="project" value="UniProtKB-KW"/>
</dbReference>
<dbReference type="GO" id="GO:0009252">
    <property type="term" value="P:peptidoglycan biosynthetic process"/>
    <property type="evidence" value="ECO:0007669"/>
    <property type="project" value="UniProtKB-UniRule"/>
</dbReference>
<dbReference type="GO" id="GO:0008360">
    <property type="term" value="P:regulation of cell shape"/>
    <property type="evidence" value="ECO:0007669"/>
    <property type="project" value="UniProtKB-KW"/>
</dbReference>
<dbReference type="Gene3D" id="3.30.465.10">
    <property type="match status" value="1"/>
</dbReference>
<dbReference type="Gene3D" id="3.90.78.10">
    <property type="entry name" value="UDP-N-acetylenolpyruvoylglucosamine reductase, C-terminal domain"/>
    <property type="match status" value="1"/>
</dbReference>
<dbReference type="Gene3D" id="3.30.43.10">
    <property type="entry name" value="Uridine Diphospho-n-acetylenolpyruvylglucosamine Reductase, domain 2"/>
    <property type="match status" value="1"/>
</dbReference>
<dbReference type="HAMAP" id="MF_00037">
    <property type="entry name" value="MurB"/>
    <property type="match status" value="1"/>
</dbReference>
<dbReference type="InterPro" id="IPR016166">
    <property type="entry name" value="FAD-bd_PCMH"/>
</dbReference>
<dbReference type="InterPro" id="IPR036318">
    <property type="entry name" value="FAD-bd_PCMH-like_sf"/>
</dbReference>
<dbReference type="InterPro" id="IPR016167">
    <property type="entry name" value="FAD-bd_PCMH_sub1"/>
</dbReference>
<dbReference type="InterPro" id="IPR016169">
    <property type="entry name" value="FAD-bd_PCMH_sub2"/>
</dbReference>
<dbReference type="InterPro" id="IPR003170">
    <property type="entry name" value="MurB"/>
</dbReference>
<dbReference type="InterPro" id="IPR011601">
    <property type="entry name" value="MurB_C"/>
</dbReference>
<dbReference type="InterPro" id="IPR036635">
    <property type="entry name" value="MurB_C_sf"/>
</dbReference>
<dbReference type="InterPro" id="IPR006094">
    <property type="entry name" value="Oxid_FAD_bind_N"/>
</dbReference>
<dbReference type="NCBIfam" id="TIGR00179">
    <property type="entry name" value="murB"/>
    <property type="match status" value="1"/>
</dbReference>
<dbReference type="NCBIfam" id="NF010480">
    <property type="entry name" value="PRK13905.1"/>
    <property type="match status" value="1"/>
</dbReference>
<dbReference type="PANTHER" id="PTHR21071">
    <property type="entry name" value="UDP-N-ACETYLENOLPYRUVOYLGLUCOSAMINE REDUCTASE"/>
    <property type="match status" value="1"/>
</dbReference>
<dbReference type="PANTHER" id="PTHR21071:SF4">
    <property type="entry name" value="UDP-N-ACETYLENOLPYRUVOYLGLUCOSAMINE REDUCTASE"/>
    <property type="match status" value="1"/>
</dbReference>
<dbReference type="Pfam" id="PF01565">
    <property type="entry name" value="FAD_binding_4"/>
    <property type="match status" value="1"/>
</dbReference>
<dbReference type="Pfam" id="PF02873">
    <property type="entry name" value="MurB_C"/>
    <property type="match status" value="1"/>
</dbReference>
<dbReference type="SUPFAM" id="SSF56176">
    <property type="entry name" value="FAD-binding/transporter-associated domain-like"/>
    <property type="match status" value="1"/>
</dbReference>
<dbReference type="SUPFAM" id="SSF56194">
    <property type="entry name" value="Uridine diphospho-N-Acetylenolpyruvylglucosamine reductase, MurB, C-terminal domain"/>
    <property type="match status" value="1"/>
</dbReference>
<dbReference type="PROSITE" id="PS51387">
    <property type="entry name" value="FAD_PCMH"/>
    <property type="match status" value="1"/>
</dbReference>
<proteinExistence type="inferred from homology"/>
<accession>A7GIX4</accession>
<reference key="1">
    <citation type="submission" date="2007-06" db="EMBL/GenBank/DDBJ databases">
        <authorList>
            <person name="Brinkac L.M."/>
            <person name="Daugherty S."/>
            <person name="Dodson R.J."/>
            <person name="Madupu R."/>
            <person name="Brown J.L."/>
            <person name="Bruce D."/>
            <person name="Detter C."/>
            <person name="Munk C."/>
            <person name="Smith L.A."/>
            <person name="Smith T.J."/>
            <person name="White O."/>
            <person name="Brettin T.S."/>
        </authorList>
    </citation>
    <scope>NUCLEOTIDE SEQUENCE [LARGE SCALE GENOMIC DNA]</scope>
    <source>
        <strain>Langeland / NCTC 10281 / Type F</strain>
    </source>
</reference>
<name>MURB_CLOBL</name>
<protein>
    <recommendedName>
        <fullName evidence="1">UDP-N-acetylenolpyruvoylglucosamine reductase</fullName>
        <ecNumber evidence="1">1.3.1.98</ecNumber>
    </recommendedName>
    <alternativeName>
        <fullName evidence="1">UDP-N-acetylmuramate dehydrogenase</fullName>
    </alternativeName>
</protein>
<comment type="function">
    <text evidence="1">Cell wall formation.</text>
</comment>
<comment type="catalytic activity">
    <reaction evidence="1">
        <text>UDP-N-acetyl-alpha-D-muramate + NADP(+) = UDP-N-acetyl-3-O-(1-carboxyvinyl)-alpha-D-glucosamine + NADPH + H(+)</text>
        <dbReference type="Rhea" id="RHEA:12248"/>
        <dbReference type="ChEBI" id="CHEBI:15378"/>
        <dbReference type="ChEBI" id="CHEBI:57783"/>
        <dbReference type="ChEBI" id="CHEBI:58349"/>
        <dbReference type="ChEBI" id="CHEBI:68483"/>
        <dbReference type="ChEBI" id="CHEBI:70757"/>
        <dbReference type="EC" id="1.3.1.98"/>
    </reaction>
</comment>
<comment type="cofactor">
    <cofactor evidence="1">
        <name>FAD</name>
        <dbReference type="ChEBI" id="CHEBI:57692"/>
    </cofactor>
</comment>
<comment type="pathway">
    <text evidence="1">Cell wall biogenesis; peptidoglycan biosynthesis.</text>
</comment>
<comment type="subcellular location">
    <subcellularLocation>
        <location evidence="1">Cytoplasm</location>
    </subcellularLocation>
</comment>
<comment type="similarity">
    <text evidence="1">Belongs to the MurB family.</text>
</comment>
<keyword id="KW-0131">Cell cycle</keyword>
<keyword id="KW-0132">Cell division</keyword>
<keyword id="KW-0133">Cell shape</keyword>
<keyword id="KW-0961">Cell wall biogenesis/degradation</keyword>
<keyword id="KW-0963">Cytoplasm</keyword>
<keyword id="KW-0274">FAD</keyword>
<keyword id="KW-0285">Flavoprotein</keyword>
<keyword id="KW-0521">NADP</keyword>
<keyword id="KW-0560">Oxidoreductase</keyword>
<keyword id="KW-0573">Peptidoglycan synthesis</keyword>
<sequence>MNQYKNFIMQFEDIVGNNNVLIDEPMKKHTSFKVGGPADLLITPTTLEQVKDSIILCRNNSIPYYIIGNGSNLLVRDGGIRGVVIKFLKLGDIKVEGDRVIAQSGAPLTNICNEALKSNLGGLEFACGIPGSVGGAVTMNAGAYNGEISQVIESAKVIDKDGNVFLLNKEQLDLGYRMSAIQKYHYIVLEVTFKLHNSEYDTIKNRIMDLNRRRTEKQPLEYPSAGSTFKRPEGHFAAKLIEDTGLKGESIGGAQVSEKHSGFIINKGGATAGDILNLIEFVQNKVMEKFQVDLHTEVRIIGEENN</sequence>
<organism>
    <name type="scientific">Clostridium botulinum (strain Langeland / NCTC 10281 / Type F)</name>
    <dbReference type="NCBI Taxonomy" id="441772"/>
    <lineage>
        <taxon>Bacteria</taxon>
        <taxon>Bacillati</taxon>
        <taxon>Bacillota</taxon>
        <taxon>Clostridia</taxon>
        <taxon>Eubacteriales</taxon>
        <taxon>Clostridiaceae</taxon>
        <taxon>Clostridium</taxon>
    </lineage>
</organism>
<gene>
    <name evidence="1" type="primary">murB</name>
    <name type="ordered locus">CLI_3562</name>
</gene>
<feature type="chain" id="PRO_1000002880" description="UDP-N-acetylenolpyruvoylglucosamine reductase">
    <location>
        <begin position="1"/>
        <end position="306"/>
    </location>
</feature>
<feature type="domain" description="FAD-binding PCMH-type" evidence="1">
    <location>
        <begin position="34"/>
        <end position="198"/>
    </location>
</feature>
<feature type="active site" evidence="1">
    <location>
        <position position="177"/>
    </location>
</feature>
<feature type="active site" description="Proton donor" evidence="1">
    <location>
        <position position="227"/>
    </location>
</feature>
<feature type="active site" evidence="1">
    <location>
        <position position="297"/>
    </location>
</feature>
<evidence type="ECO:0000255" key="1">
    <source>
        <dbReference type="HAMAP-Rule" id="MF_00037"/>
    </source>
</evidence>